<organism>
    <name type="scientific">Mycobacterium sp. (strain MCS)</name>
    <dbReference type="NCBI Taxonomy" id="164756"/>
    <lineage>
        <taxon>Bacteria</taxon>
        <taxon>Bacillati</taxon>
        <taxon>Actinomycetota</taxon>
        <taxon>Actinomycetes</taxon>
        <taxon>Mycobacteriales</taxon>
        <taxon>Mycobacteriaceae</taxon>
        <taxon>Mycobacterium</taxon>
    </lineage>
</organism>
<reference key="1">
    <citation type="submission" date="2006-06" db="EMBL/GenBank/DDBJ databases">
        <title>Complete sequence of chromosome of Mycobacterium sp. MCS.</title>
        <authorList>
            <consortium name="US DOE Joint Genome Institute"/>
            <person name="Copeland A."/>
            <person name="Lucas S."/>
            <person name="Lapidus A."/>
            <person name="Barry K."/>
            <person name="Detter J.C."/>
            <person name="Glavina del Rio T."/>
            <person name="Hammon N."/>
            <person name="Israni S."/>
            <person name="Dalin E."/>
            <person name="Tice H."/>
            <person name="Pitluck S."/>
            <person name="Martinez M."/>
            <person name="Schmutz J."/>
            <person name="Larimer F."/>
            <person name="Land M."/>
            <person name="Hauser L."/>
            <person name="Kyrpides N."/>
            <person name="Kim E."/>
            <person name="Miller C.D."/>
            <person name="Hughes J.E."/>
            <person name="Anderson A.J."/>
            <person name="Sims R.C."/>
            <person name="Richardson P."/>
        </authorList>
    </citation>
    <scope>NUCLEOTIDE SEQUENCE [LARGE SCALE GENOMIC DNA]</scope>
    <source>
        <strain>MCS</strain>
    </source>
</reference>
<feature type="chain" id="PRO_0000379580" description="Uncharacterized tRNA/rRNA methyltransferase Mmcs_4736">
    <location>
        <begin position="1"/>
        <end position="314"/>
    </location>
</feature>
<feature type="region of interest" description="Disordered" evidence="2">
    <location>
        <begin position="1"/>
        <end position="73"/>
    </location>
</feature>
<feature type="compositionally biased region" description="Basic residues" evidence="2">
    <location>
        <begin position="1"/>
        <end position="16"/>
    </location>
</feature>
<feature type="compositionally biased region" description="Basic residues" evidence="2">
    <location>
        <begin position="49"/>
        <end position="65"/>
    </location>
</feature>
<feature type="binding site" evidence="1">
    <location>
        <position position="266"/>
    </location>
    <ligand>
        <name>S-adenosyl-L-methionine</name>
        <dbReference type="ChEBI" id="CHEBI:59789"/>
    </ligand>
</feature>
<feature type="binding site" evidence="1">
    <location>
        <position position="286"/>
    </location>
    <ligand>
        <name>S-adenosyl-L-methionine</name>
        <dbReference type="ChEBI" id="CHEBI:59789"/>
    </ligand>
</feature>
<feature type="binding site" evidence="1">
    <location>
        <position position="295"/>
    </location>
    <ligand>
        <name>S-adenosyl-L-methionine</name>
        <dbReference type="ChEBI" id="CHEBI:59789"/>
    </ligand>
</feature>
<dbReference type="EC" id="2.1.1.-"/>
<dbReference type="EMBL" id="CP000384">
    <property type="protein sequence ID" value="ABG10840.1"/>
    <property type="molecule type" value="Genomic_DNA"/>
</dbReference>
<dbReference type="SMR" id="Q1B2P4"/>
<dbReference type="KEGG" id="mmc:Mmcs_4736"/>
<dbReference type="HOGENOM" id="CLU_021322_0_0_11"/>
<dbReference type="BioCyc" id="MSP164756:G1G6O-4838-MONOMER"/>
<dbReference type="GO" id="GO:0005829">
    <property type="term" value="C:cytosol"/>
    <property type="evidence" value="ECO:0007669"/>
    <property type="project" value="TreeGrafter"/>
</dbReference>
<dbReference type="GO" id="GO:0003723">
    <property type="term" value="F:RNA binding"/>
    <property type="evidence" value="ECO:0007669"/>
    <property type="project" value="InterPro"/>
</dbReference>
<dbReference type="GO" id="GO:0008173">
    <property type="term" value="F:RNA methyltransferase activity"/>
    <property type="evidence" value="ECO:0007669"/>
    <property type="project" value="InterPro"/>
</dbReference>
<dbReference type="GO" id="GO:0032259">
    <property type="term" value="P:methylation"/>
    <property type="evidence" value="ECO:0007669"/>
    <property type="project" value="UniProtKB-KW"/>
</dbReference>
<dbReference type="GO" id="GO:0006396">
    <property type="term" value="P:RNA processing"/>
    <property type="evidence" value="ECO:0007669"/>
    <property type="project" value="InterPro"/>
</dbReference>
<dbReference type="CDD" id="cd18103">
    <property type="entry name" value="SpoU-like_RlmB"/>
    <property type="match status" value="1"/>
</dbReference>
<dbReference type="FunFam" id="3.30.1330.30:FF:000024">
    <property type="entry name" value="Putative tRNA/rRNA methyltransferase"/>
    <property type="match status" value="1"/>
</dbReference>
<dbReference type="FunFam" id="3.40.1280.10:FF:000015">
    <property type="entry name" value="Putative tRNA/rRNA methyltransferase"/>
    <property type="match status" value="1"/>
</dbReference>
<dbReference type="Gene3D" id="3.30.1330.30">
    <property type="match status" value="1"/>
</dbReference>
<dbReference type="Gene3D" id="3.40.1280.10">
    <property type="match status" value="1"/>
</dbReference>
<dbReference type="InterPro" id="IPR029028">
    <property type="entry name" value="Alpha/beta_knot_MTases"/>
</dbReference>
<dbReference type="InterPro" id="IPR029064">
    <property type="entry name" value="Ribosomal_eL30-like_sf"/>
</dbReference>
<dbReference type="InterPro" id="IPR004441">
    <property type="entry name" value="rRNA_MeTrfase_TrmH"/>
</dbReference>
<dbReference type="InterPro" id="IPR001537">
    <property type="entry name" value="SpoU_MeTrfase"/>
</dbReference>
<dbReference type="InterPro" id="IPR013123">
    <property type="entry name" value="SpoU_subst-bd"/>
</dbReference>
<dbReference type="InterPro" id="IPR029026">
    <property type="entry name" value="tRNA_m1G_MTases_N"/>
</dbReference>
<dbReference type="NCBIfam" id="TIGR00186">
    <property type="entry name" value="rRNA_methyl_3"/>
    <property type="match status" value="1"/>
</dbReference>
<dbReference type="PANTHER" id="PTHR46429">
    <property type="entry name" value="23S RRNA (GUANOSINE-2'-O-)-METHYLTRANSFERASE RLMB"/>
    <property type="match status" value="1"/>
</dbReference>
<dbReference type="PANTHER" id="PTHR46429:SF1">
    <property type="entry name" value="23S RRNA (GUANOSINE-2'-O-)-METHYLTRANSFERASE RLMB"/>
    <property type="match status" value="1"/>
</dbReference>
<dbReference type="Pfam" id="PF00588">
    <property type="entry name" value="SpoU_methylase"/>
    <property type="match status" value="1"/>
</dbReference>
<dbReference type="Pfam" id="PF08032">
    <property type="entry name" value="SpoU_sub_bind"/>
    <property type="match status" value="1"/>
</dbReference>
<dbReference type="SMART" id="SM00967">
    <property type="entry name" value="SpoU_sub_bind"/>
    <property type="match status" value="1"/>
</dbReference>
<dbReference type="SUPFAM" id="SSF75217">
    <property type="entry name" value="alpha/beta knot"/>
    <property type="match status" value="1"/>
</dbReference>
<dbReference type="SUPFAM" id="SSF55315">
    <property type="entry name" value="L30e-like"/>
    <property type="match status" value="1"/>
</dbReference>
<proteinExistence type="inferred from homology"/>
<keyword id="KW-0489">Methyltransferase</keyword>
<keyword id="KW-0949">S-adenosyl-L-methionine</keyword>
<keyword id="KW-0808">Transferase</keyword>
<name>Y4736_MYCSS</name>
<accession>Q1B2P4</accession>
<gene>
    <name type="ordered locus">Mmcs_4736</name>
</gene>
<comment type="similarity">
    <text evidence="3">Belongs to the class IV-like SAM-binding methyltransferase superfamily. RNA methyltransferase TrmH family.</text>
</comment>
<sequence length="314" mass="32668">MAGNSKRRGAVRKAGTKKGPTVGSGGVRRRGLEGRGATPPAHQRPNHPAAKRAAKAAKQQQRRPARKTDETELVLGRNPVVECLRAEVPATALYVAMGTEADERVTEAVQIAADNGISILEVPRSDLDRMSNNALHQGLGLQVPPYDYAHPDDLLATAKADGAPALLVALDNISDPRNLGAIVRSVAAFGGHGVLIPQRRSASVTAVAWRTSAGAAARLPVARATNLNRTLKSWADGGLQVVGLDADGDTTLDELDGTGPVVVVVGSEGKGLSRLVRENCDAVVSIPMAGPTESLNASVAAGVVLAEIARQRRS</sequence>
<protein>
    <recommendedName>
        <fullName>Uncharacterized tRNA/rRNA methyltransferase Mmcs_4736</fullName>
        <ecNumber>2.1.1.-</ecNumber>
    </recommendedName>
</protein>
<evidence type="ECO:0000250" key="1"/>
<evidence type="ECO:0000256" key="2">
    <source>
        <dbReference type="SAM" id="MobiDB-lite"/>
    </source>
</evidence>
<evidence type="ECO:0000305" key="3"/>